<gene>
    <name type="primary">F</name>
</gene>
<protein>
    <recommendedName>
        <fullName>Fusion glycoprotein F0</fullName>
        <shortName>Protein F</shortName>
    </recommendedName>
    <component>
        <recommendedName>
            <fullName evidence="1">Fusion glycoprotein F2</fullName>
            <shortName>F2</shortName>
        </recommendedName>
    </component>
    <component>
        <recommendedName>
            <fullName evidence="1">p27</fullName>
        </recommendedName>
        <alternativeName>
            <fullName>Intervening segment</fullName>
        </alternativeName>
        <alternativeName>
            <fullName>Pep27</fullName>
        </alternativeName>
        <alternativeName>
            <fullName>Peptide 27</fullName>
        </alternativeName>
    </component>
    <component>
        <recommendedName>
            <fullName evidence="1">Fusion glycoprotein F1</fullName>
            <shortName>F1</shortName>
        </recommendedName>
    </component>
</protein>
<organism>
    <name type="scientific">Human respiratory syncytial virus B (strain B1)</name>
    <dbReference type="NCBI Taxonomy" id="79692"/>
    <lineage>
        <taxon>Viruses</taxon>
        <taxon>Riboviria</taxon>
        <taxon>Orthornavirae</taxon>
        <taxon>Negarnaviricota</taxon>
        <taxon>Haploviricotina</taxon>
        <taxon>Monjiviricetes</taxon>
        <taxon>Mononegavirales</taxon>
        <taxon>Pneumoviridae</taxon>
        <taxon>Orthopneumovirus</taxon>
        <taxon>Orthopneumovirus hominis</taxon>
    </lineage>
</organism>
<accession>O36634</accession>
<dbReference type="EMBL" id="AF013254">
    <property type="protein sequence ID" value="AAB82436.1"/>
    <property type="molecule type" value="Genomic_RNA"/>
</dbReference>
<dbReference type="RefSeq" id="NP_056863.1">
    <property type="nucleotide sequence ID" value="NC_001781.1"/>
</dbReference>
<dbReference type="SMR" id="O36634"/>
<dbReference type="GlyCosmos" id="O36634">
    <property type="glycosylation" value="6 sites, No reported glycans"/>
</dbReference>
<dbReference type="ABCD" id="O36634">
    <property type="antibodies" value="3 sequenced antibodies"/>
</dbReference>
<dbReference type="GeneID" id="1489825"/>
<dbReference type="KEGG" id="vg:1489825"/>
<dbReference type="Proteomes" id="UP000002472">
    <property type="component" value="Segment"/>
</dbReference>
<dbReference type="GO" id="GO:0044178">
    <property type="term" value="C:host cell Golgi membrane"/>
    <property type="evidence" value="ECO:0007669"/>
    <property type="project" value="UniProtKB-SubCell"/>
</dbReference>
<dbReference type="GO" id="GO:0020002">
    <property type="term" value="C:host cell plasma membrane"/>
    <property type="evidence" value="ECO:0007669"/>
    <property type="project" value="UniProtKB-SubCell"/>
</dbReference>
<dbReference type="GO" id="GO:0016020">
    <property type="term" value="C:membrane"/>
    <property type="evidence" value="ECO:0007669"/>
    <property type="project" value="UniProtKB-KW"/>
</dbReference>
<dbReference type="GO" id="GO:0019031">
    <property type="term" value="C:viral envelope"/>
    <property type="evidence" value="ECO:0007669"/>
    <property type="project" value="UniProtKB-KW"/>
</dbReference>
<dbReference type="GO" id="GO:0055036">
    <property type="term" value="C:virion membrane"/>
    <property type="evidence" value="ECO:0007669"/>
    <property type="project" value="UniProtKB-SubCell"/>
</dbReference>
<dbReference type="GO" id="GO:0098670">
    <property type="term" value="P:entry receptor-mediated virion attachment to host cell"/>
    <property type="evidence" value="ECO:0007669"/>
    <property type="project" value="UniProtKB-KW"/>
</dbReference>
<dbReference type="GO" id="GO:0019064">
    <property type="term" value="P:fusion of virus membrane with host plasma membrane"/>
    <property type="evidence" value="ECO:0007669"/>
    <property type="project" value="UniProtKB-KW"/>
</dbReference>
<dbReference type="GO" id="GO:0046718">
    <property type="term" value="P:symbiont entry into host cell"/>
    <property type="evidence" value="ECO:0007669"/>
    <property type="project" value="UniProtKB-KW"/>
</dbReference>
<dbReference type="GO" id="GO:0060141">
    <property type="term" value="P:symbiont-mediated induction of syncytium formation"/>
    <property type="evidence" value="ECO:0007669"/>
    <property type="project" value="UniProtKB-KW"/>
</dbReference>
<dbReference type="FunFam" id="1.10.287.2480:FF:000001">
    <property type="entry name" value="Fusion glycoprotein F0"/>
    <property type="match status" value="1"/>
</dbReference>
<dbReference type="FunFam" id="1.10.287.2480:FF:000002">
    <property type="entry name" value="Fusion glycoprotein F0"/>
    <property type="match status" value="1"/>
</dbReference>
<dbReference type="Gene3D" id="1.10.287.2480">
    <property type="match status" value="2"/>
</dbReference>
<dbReference type="Gene3D" id="6.10.250.1160">
    <property type="match status" value="1"/>
</dbReference>
<dbReference type="Gene3D" id="6.20.370.50">
    <property type="match status" value="1"/>
</dbReference>
<dbReference type="InterPro" id="IPR000776">
    <property type="entry name" value="Fusion_F0_Paramyxovir"/>
</dbReference>
<dbReference type="Pfam" id="PF00523">
    <property type="entry name" value="Fusion_gly"/>
    <property type="match status" value="1"/>
</dbReference>
<dbReference type="SUPFAM" id="SSF58069">
    <property type="entry name" value="Virus ectodomain"/>
    <property type="match status" value="2"/>
</dbReference>
<sequence>MELLIHRLSAIFLTLAINALYLTSSQNITEEFYQSTCSAVSRGYFSALRTGWYTSVITIELSNIKETKCNGTDTKVKLIKQELDKYKNAVTELQLLMQNTPAANNRARREAPQYMNYTINTTKNLNVSISKKRKRRFLGFLLGVGSAIASGIAVSKVLHLEGEVNKIKNALLSTNKAVVSLSNGVSVLTSKVLDLKNYINNQLLPIVNQQSCRISNIETVIEFQQKNSRLLEINREFSVNAGVTTPLSTYMLTNSELLSLINDMPITNDQKKLMSSNVQIVRQQSYSIMSIIKEEVLAYVVQLPIYGVIDTPCWKLHTSPLCTTNIKEGSNICLTRTDRGWYCDNAGSVSFFPQADTCKVQSNRVFCDTMNSLTLPSEVSLCNTDIFNSKYDCKIMTSKTDISSSVITSLGAIVSCYGKTKCTASNKNRGIIKTFSNGCDYVSNKGVDTVSVGNTLYYVNKLEGKNLYVKGEPIINYYDPLVFPSDEFDASISQVNEKINQSLAFIRRSDELLHNVNTGKSTTNIMITTIIIVIIVVLLSLIAIGLLLYCKAKNTPVTLSKDQLSGINNIAFSK</sequence>
<proteinExistence type="evidence at protein level"/>
<evidence type="ECO:0000250" key="1">
    <source>
        <dbReference type="UniProtKB" id="P03420"/>
    </source>
</evidence>
<evidence type="ECO:0000250" key="2">
    <source>
        <dbReference type="UniProtKB" id="P11209"/>
    </source>
</evidence>
<evidence type="ECO:0000255" key="3"/>
<evidence type="ECO:0000269" key="4">
    <source>
    </source>
</evidence>
<evidence type="ECO:0000305" key="5"/>
<keyword id="KW-0165">Cleavage on pair of basic residues</keyword>
<keyword id="KW-0175">Coiled coil</keyword>
<keyword id="KW-1015">Disulfide bond</keyword>
<keyword id="KW-1169">Fusion of virus membrane with host cell membrane</keyword>
<keyword id="KW-1168">Fusion of virus membrane with host membrane</keyword>
<keyword id="KW-0325">Glycoprotein</keyword>
<keyword id="KW-1032">Host cell membrane</keyword>
<keyword id="KW-1040">Host Golgi apparatus</keyword>
<keyword id="KW-1043">Host membrane</keyword>
<keyword id="KW-0945">Host-virus interaction</keyword>
<keyword id="KW-0449">Lipoprotein</keyword>
<keyword id="KW-0472">Membrane</keyword>
<keyword id="KW-0564">Palmitate</keyword>
<keyword id="KW-1185">Reference proteome</keyword>
<keyword id="KW-0732">Signal</keyword>
<keyword id="KW-1180">Syncytium formation induced by viral infection</keyword>
<keyword id="KW-0812">Transmembrane</keyword>
<keyword id="KW-1133">Transmembrane helix</keyword>
<keyword id="KW-1161">Viral attachment to host cell</keyword>
<keyword id="KW-1234">Viral attachment to host entry receptor</keyword>
<keyword id="KW-0261">Viral envelope protein</keyword>
<keyword id="KW-1162">Viral penetration into host cytoplasm</keyword>
<keyword id="KW-0946">Virion</keyword>
<keyword id="KW-1160">Virus entry into host cell</keyword>
<reference key="1">
    <citation type="journal article" date="1997" name="Proc. Natl. Acad. Sci. U.S.A.">
        <title>Respiratory syncytial virus (RSV) SH and G proteins are not essential for viral replication in vitro: clinical evaluation and molecular characterization of a cold-passaged, attenuated RSV subgroup B mutant.</title>
        <authorList>
            <person name="Karron R.A."/>
            <person name="Buonagurio D.A."/>
            <person name="Georgiu A.F."/>
            <person name="Whitehead S.S."/>
            <person name="Adamus J.E."/>
            <person name="Clements-Mann M.L."/>
            <person name="Harris D.O."/>
            <person name="Randolph V.B."/>
            <person name="Udem S.A."/>
            <person name="Murphy B.R."/>
            <person name="Sidhu M.S."/>
        </authorList>
    </citation>
    <scope>NUCLEOTIDE SEQUENCE [GENOMIC RNA]</scope>
</reference>
<reference key="2">
    <citation type="journal article" date="1989" name="J. Biol. Chem.">
        <title>Fatty acid acylation of the fusion glycoprotein of human respiratory syncytial virus.</title>
        <authorList>
            <person name="Arumugham R.G."/>
            <person name="Seid R.C. Jr."/>
            <person name="Doyle S."/>
            <person name="Hildreth S.W."/>
            <person name="Paradisio P.R."/>
        </authorList>
    </citation>
    <scope>PALMITOYLATION AT CYS-550</scope>
</reference>
<comment type="function">
    <molecule>Fusion glycoprotein F0</molecule>
    <text evidence="1">Inactive precursor that is cleaved at two sites by a furin-like protease to give rise to the mature F1 and F2 fusion glycoproteins.</text>
</comment>
<comment type="function">
    <molecule>Fusion glycoprotein F1</molecule>
    <text evidence="1">Class I viral fusion protein. Under the current model, the protein has at least 3 conformational states: pre-fusion native state, pre-hairpin intermediate state, and post-fusion hairpin state. During viral and plasma cell membrane fusion, the coiled coil regions assume a trimer-of-hairpins structure, positioning the fusion peptide in close proximity to the C-terminal region of the ectodomain. The formation of this structure appears to drive apposition and subsequent fusion of viral and cellular membranes leading to delivery of the nucleocapsid into the cytoplasm. This fusion is pH independent and occurs at the plasma or endosomal membrane. The trimer of F1-F2 (F protein) also facilitates the attachment to host cell by binding to host heparan sulfate. F protein is involved in the entry into the host cell through the interaction with host IGF1R. This interaction activates PRKCZ/PKCzeta that recruits host NCL/nucleolin to the apical cell surface where it can bind fusion glycoprotein F1. Later in infection, F protein expressed at the plasma membrane of infected cells can mediate fusion with adjacent cells to form syncytia, a cytopathic effect that could lead to tissue necrosis. F protein may trigger p53-dependent apoptosis.</text>
</comment>
<comment type="function">
    <molecule>Fusion glycoprotein F2</molecule>
    <text evidence="1">Major determinant of the species specificity of RSV infection. The trimer of F1-F2 (F protein) also facilitates the attachment to host cell by binding to host heparan sulfate. F protein is involved in the entry into the host cell through the interaction with host IGF1R. This interaction activates PRKCZ/PKCzeta that recruits host NCL/nucleolin to the apical cell surface where it can bind fusion glycoprotein F1. Later in infection, F protein expressed at the plasma membrane of infected cells can mediate fusion with adjacent cells to form syncytia, a cytopathic effect that could lead to tissue necrosis. F protein seems to trigger p53-dependent apoptosis.</text>
</comment>
<comment type="subunit">
    <molecule>Fusion glycoprotein F1</molecule>
    <text evidence="1">Homotrimer. Heterodimer with fusion protein F2; disulfide-linked. Interacts with host NCL; this interaction plays a role in viral entry into the host cell. As a heterodimer with F2, interacts with host heparan sulfate. As a heterodimer with F2, interacts with host IGF1R; this interaction activates PRKCZ/PKCzeta that recruits NCL/nucleolin from the host nucleus to the plasma membrane. Part of a complex composed of F1, F2 and G glycoproteins. As a heterodimer with F2, interacts with host RHOA; this interaction facilitates virus-induced syncytium formation.</text>
</comment>
<comment type="subunit">
    <molecule>Fusion glycoprotein F2</molecule>
    <text evidence="1">Homotrimer. Heterodimer with fusion protein F1; disulfide-linked. As a heterodimer with F1, interacts with host heparan sulfate. As a heterodimer with F1, interacts with host IGF1R; this interaction activates PRKCZ/PKCzeta that recruits NCL/nucleolin from the host nucleus to the plasma membrane. Part of a complex composed of F1, F2 and G glycoproteins. As a heterodimer with F1, interacts with host RHOA; this interaction facilitates virus-induced syncytium formation.</text>
</comment>
<comment type="subcellular location">
    <molecule>Fusion glycoprotein F0</molecule>
    <subcellularLocation>
        <location evidence="1">Host Golgi apparatus membrane</location>
        <topology evidence="1">Single-pass membrane protein</topology>
    </subcellularLocation>
</comment>
<comment type="subcellular location">
    <molecule>Fusion glycoprotein F1</molecule>
    <subcellularLocation>
        <location evidence="1">Virion membrane</location>
        <topology evidence="1">Single-pass type I membrane protein</topology>
    </subcellularLocation>
    <subcellularLocation>
        <location evidence="1">Host cell membrane</location>
        <topology evidence="1">Single-pass membrane protein</topology>
    </subcellularLocation>
    <text evidence="1">Localized at the host apical membrane.</text>
</comment>
<comment type="subcellular location">
    <molecule>Fusion glycoprotein F2</molecule>
    <subcellularLocation>
        <location evidence="1">Virion membrane</location>
    </subcellularLocation>
    <subcellularLocation>
        <location evidence="1">Host cell membrane</location>
    </subcellularLocation>
    <text evidence="1">Localized at the host apical membrane.</text>
</comment>
<comment type="domain">
    <molecule>Fusion glycoprotein F0</molecule>
    <text evidence="1 2">The N-terminus is a hydrophobic fusion peptide that inserts into the target host membrane (By similarity). It is buried in the center of the trimer cavity before cleavage by host furin. The coiled coil (heptad repeat) regions are probably involved in homotrimerization, heterodimerization and in the formation of a fusion-active hairpin structure (By similarity).</text>
</comment>
<comment type="domain">
    <molecule>Fusion glycoprotein F1</molecule>
    <text evidence="1 2">The N-terminus is a hydrophobic fusion peptide that inserts into the target host membrane (By similarity). It is buried in the center of the trimer cavity before cleavage by host furin. The coiled coil (heptad repeat) regions are probably involved in homotrimerization, heterodimerization and in the formation of a fusion-active hairpin structure (By similarity).</text>
</comment>
<comment type="PTM">
    <molecule>Fusion glycoprotein F0</molecule>
    <text evidence="1">The F glycoprotein is synthesized as a F0 inactive precursor that is heavily N-glycosylated and processed at two sites by a host furin-like protease probably in the Golgi. The cleavage site between p27 and F1 may occur after endocytosis to yield the mature F1 and F2 proteins. Both cleavages are required for membrane fusion and p27 is released from the processed protein.</text>
</comment>
<comment type="similarity">
    <text evidence="5">Belongs to the paramyxoviruses fusion glycoprotein family.</text>
</comment>
<name>FUS_HRSVB</name>
<feature type="signal peptide" evidence="3">
    <location>
        <begin position="1"/>
        <end position="25"/>
    </location>
</feature>
<feature type="chain" id="PRO_0000390376" description="Fusion glycoprotein F0">
    <location>
        <begin position="26"/>
        <end position="574"/>
    </location>
</feature>
<feature type="chain" id="PRO_0000390377" description="Fusion glycoprotein F2" evidence="1">
    <location>
        <begin position="26"/>
        <end position="109"/>
    </location>
</feature>
<feature type="peptide" id="PRO_0000432668" description="p27" evidence="1">
    <location>
        <begin position="110"/>
        <end position="136"/>
    </location>
</feature>
<feature type="chain" id="PRO_0000390378" description="Fusion glycoprotein F1" evidence="1">
    <location>
        <begin position="137"/>
        <end position="574"/>
    </location>
</feature>
<feature type="topological domain" description="Extracellular" evidence="1">
    <location>
        <begin position="26"/>
        <end position="524"/>
    </location>
</feature>
<feature type="transmembrane region" description="Helical" evidence="1">
    <location>
        <begin position="525"/>
        <end position="550"/>
    </location>
</feature>
<feature type="topological domain" description="Cytoplasmic" evidence="1">
    <location>
        <begin position="551"/>
        <end position="574"/>
    </location>
</feature>
<feature type="region of interest" description="Fusion peptide" evidence="2">
    <location>
        <begin position="137"/>
        <end position="157"/>
    </location>
</feature>
<feature type="coiled-coil region" evidence="2">
    <location>
        <begin position="76"/>
        <end position="96"/>
    </location>
</feature>
<feature type="coiled-coil region" evidence="2">
    <location>
        <begin position="158"/>
        <end position="209"/>
    </location>
</feature>
<feature type="coiled-coil region" evidence="2">
    <location>
        <begin position="481"/>
        <end position="516"/>
    </location>
</feature>
<feature type="site" description="Cleavage; by host furin-like protease" evidence="1">
    <location>
        <begin position="109"/>
        <end position="110"/>
    </location>
</feature>
<feature type="site" description="Cleavage; by host furin-like protease" evidence="1">
    <location>
        <begin position="136"/>
        <end position="137"/>
    </location>
</feature>
<feature type="lipid moiety-binding region" description="S-palmitoyl cysteine; by host" evidence="4">
    <location>
        <position position="550"/>
    </location>
</feature>
<feature type="glycosylation site" description="N-linked (GlcNAc...) asparagine; by host" evidence="1">
    <location>
        <position position="27"/>
    </location>
</feature>
<feature type="glycosylation site" description="N-linked (GlcNAc...) asparagine; by host" evidence="1">
    <location>
        <position position="70"/>
    </location>
</feature>
<feature type="glycosylation site" description="N-linked (GlcNAc...) asparagine; by host" evidence="3">
    <location>
        <position position="116"/>
    </location>
</feature>
<feature type="glycosylation site" description="N-linked (GlcNAc...) asparagine; by host" evidence="3">
    <location>
        <position position="120"/>
    </location>
</feature>
<feature type="glycosylation site" description="N-linked (GlcNAc...) asparagine; by host" evidence="3">
    <location>
        <position position="126"/>
    </location>
</feature>
<feature type="glycosylation site" description="N-linked (GlcNAc...) asparagine; by host" evidence="1">
    <location>
        <position position="500"/>
    </location>
</feature>
<feature type="disulfide bond" description="Interchain (between F2 and F1 chains)" evidence="1">
    <location>
        <begin position="37"/>
        <end position="439"/>
    </location>
</feature>
<feature type="disulfide bond" description="Interchain (between F2 and F1 chains)" evidence="1">
    <location>
        <begin position="69"/>
        <end position="212"/>
    </location>
</feature>
<feature type="disulfide bond" evidence="1">
    <location>
        <begin position="313"/>
        <end position="343"/>
    </location>
</feature>
<feature type="disulfide bond" evidence="1">
    <location>
        <begin position="322"/>
        <end position="333"/>
    </location>
</feature>
<feature type="disulfide bond" evidence="1">
    <location>
        <begin position="358"/>
        <end position="367"/>
    </location>
</feature>
<feature type="disulfide bond" evidence="1">
    <location>
        <begin position="382"/>
        <end position="393"/>
    </location>
</feature>
<feature type="disulfide bond" evidence="1">
    <location>
        <begin position="416"/>
        <end position="422"/>
    </location>
</feature>
<organismHost>
    <name type="scientific">Homo sapiens</name>
    <name type="common">Human</name>
    <dbReference type="NCBI Taxonomy" id="9606"/>
</organismHost>